<comment type="function">
    <text evidence="1">Cell division inhibitor that blocks the formation of polar Z ring septums. Rapidly oscillates between the poles of the cell to destabilize FtsZ filaments that have formed before they mature into polar Z rings. Prevents FtsZ polymerization.</text>
</comment>
<comment type="subunit">
    <text evidence="1">Interacts with MinD and FtsZ.</text>
</comment>
<comment type="similarity">
    <text evidence="1">Belongs to the MinC family.</text>
</comment>
<sequence length="271" mass="28886">MSLKKSPFFELRSGSVDTLLFIVKTADLDALRAELVKRFEATPEFFADDVVAIDVRRLADNERVPLDDIRGMLSDVRMRAIGVVAQPEQHAWAAGAGLPLLEARDRRAPSPKAADDAPAQPEEPRVPAAGQAALFAQAGPSGADAVAPPAVAAAPVVAAQSATLVIDKPLRSGQQIYAKGDLVVLGPVSYGAEVIAEGNIHIYAPLRGRALAGVHGNHDARIFCTCLEPELISIAGIYRTTENPLPADVLGKSVQIRLEQEKLMIEPLRLT</sequence>
<gene>
    <name evidence="1" type="primary">minC</name>
    <name type="ordered locus">BTH_I1569</name>
</gene>
<proteinExistence type="inferred from homology"/>
<protein>
    <recommendedName>
        <fullName evidence="1">Probable septum site-determining protein MinC</fullName>
    </recommendedName>
</protein>
<dbReference type="EMBL" id="CP000086">
    <property type="protein sequence ID" value="ABC39456.1"/>
    <property type="molecule type" value="Genomic_DNA"/>
</dbReference>
<dbReference type="RefSeq" id="WP_009889717.1">
    <property type="nucleotide sequence ID" value="NZ_CP008785.1"/>
</dbReference>
<dbReference type="SMR" id="Q2SY88"/>
<dbReference type="GeneID" id="45121304"/>
<dbReference type="KEGG" id="bte:BTH_I1569"/>
<dbReference type="HOGENOM" id="CLU_067812_0_0_4"/>
<dbReference type="Proteomes" id="UP000001930">
    <property type="component" value="Chromosome I"/>
</dbReference>
<dbReference type="GO" id="GO:0000902">
    <property type="term" value="P:cell morphogenesis"/>
    <property type="evidence" value="ECO:0007669"/>
    <property type="project" value="InterPro"/>
</dbReference>
<dbReference type="GO" id="GO:0000917">
    <property type="term" value="P:division septum assembly"/>
    <property type="evidence" value="ECO:0007669"/>
    <property type="project" value="UniProtKB-KW"/>
</dbReference>
<dbReference type="GO" id="GO:0051302">
    <property type="term" value="P:regulation of cell division"/>
    <property type="evidence" value="ECO:0007669"/>
    <property type="project" value="InterPro"/>
</dbReference>
<dbReference type="GO" id="GO:1901891">
    <property type="term" value="P:regulation of cell septum assembly"/>
    <property type="evidence" value="ECO:0007669"/>
    <property type="project" value="InterPro"/>
</dbReference>
<dbReference type="Gene3D" id="2.160.20.70">
    <property type="match status" value="1"/>
</dbReference>
<dbReference type="Gene3D" id="3.30.70.260">
    <property type="match status" value="1"/>
</dbReference>
<dbReference type="HAMAP" id="MF_00267">
    <property type="entry name" value="MinC"/>
    <property type="match status" value="1"/>
</dbReference>
<dbReference type="InterPro" id="IPR016098">
    <property type="entry name" value="CAP/MinC_C"/>
</dbReference>
<dbReference type="InterPro" id="IPR013033">
    <property type="entry name" value="MinC"/>
</dbReference>
<dbReference type="InterPro" id="IPR036145">
    <property type="entry name" value="MinC_C_sf"/>
</dbReference>
<dbReference type="InterPro" id="IPR007874">
    <property type="entry name" value="MinC_N"/>
</dbReference>
<dbReference type="InterPro" id="IPR005526">
    <property type="entry name" value="Septum_form_inhib_MinC_C"/>
</dbReference>
<dbReference type="NCBIfam" id="TIGR01222">
    <property type="entry name" value="minC"/>
    <property type="match status" value="1"/>
</dbReference>
<dbReference type="PANTHER" id="PTHR34108">
    <property type="entry name" value="SEPTUM SITE-DETERMINING PROTEIN MINC"/>
    <property type="match status" value="1"/>
</dbReference>
<dbReference type="PANTHER" id="PTHR34108:SF1">
    <property type="entry name" value="SEPTUM SITE-DETERMINING PROTEIN MINC"/>
    <property type="match status" value="1"/>
</dbReference>
<dbReference type="Pfam" id="PF03775">
    <property type="entry name" value="MinC_C"/>
    <property type="match status" value="1"/>
</dbReference>
<dbReference type="Pfam" id="PF05209">
    <property type="entry name" value="MinC_N"/>
    <property type="match status" value="1"/>
</dbReference>
<dbReference type="SUPFAM" id="SSF63848">
    <property type="entry name" value="Cell-division inhibitor MinC, C-terminal domain"/>
    <property type="match status" value="1"/>
</dbReference>
<accession>Q2SY88</accession>
<name>MINC_BURTA</name>
<organism>
    <name type="scientific">Burkholderia thailandensis (strain ATCC 700388 / DSM 13276 / CCUG 48851 / CIP 106301 / E264)</name>
    <dbReference type="NCBI Taxonomy" id="271848"/>
    <lineage>
        <taxon>Bacteria</taxon>
        <taxon>Pseudomonadati</taxon>
        <taxon>Pseudomonadota</taxon>
        <taxon>Betaproteobacteria</taxon>
        <taxon>Burkholderiales</taxon>
        <taxon>Burkholderiaceae</taxon>
        <taxon>Burkholderia</taxon>
        <taxon>pseudomallei group</taxon>
    </lineage>
</organism>
<keyword id="KW-0131">Cell cycle</keyword>
<keyword id="KW-0132">Cell division</keyword>
<keyword id="KW-0717">Septation</keyword>
<feature type="chain" id="PRO_1000047819" description="Probable septum site-determining protein MinC">
    <location>
        <begin position="1"/>
        <end position="271"/>
    </location>
</feature>
<feature type="region of interest" description="Disordered" evidence="2">
    <location>
        <begin position="106"/>
        <end position="125"/>
    </location>
</feature>
<feature type="compositionally biased region" description="Low complexity" evidence="2">
    <location>
        <begin position="110"/>
        <end position="119"/>
    </location>
</feature>
<reference key="1">
    <citation type="journal article" date="2005" name="BMC Genomics">
        <title>Bacterial genome adaptation to niches: divergence of the potential virulence genes in three Burkholderia species of different survival strategies.</title>
        <authorList>
            <person name="Kim H.S."/>
            <person name="Schell M.A."/>
            <person name="Yu Y."/>
            <person name="Ulrich R.L."/>
            <person name="Sarria S.H."/>
            <person name="Nierman W.C."/>
            <person name="DeShazer D."/>
        </authorList>
    </citation>
    <scope>NUCLEOTIDE SEQUENCE [LARGE SCALE GENOMIC DNA]</scope>
    <source>
        <strain>ATCC 700388 / DSM 13276 / CCUG 48851 / CIP 106301 / E264</strain>
    </source>
</reference>
<evidence type="ECO:0000255" key="1">
    <source>
        <dbReference type="HAMAP-Rule" id="MF_00267"/>
    </source>
</evidence>
<evidence type="ECO:0000256" key="2">
    <source>
        <dbReference type="SAM" id="MobiDB-lite"/>
    </source>
</evidence>